<reference key="1">
    <citation type="journal article" date="2006" name="Nature">
        <title>The DNA sequence, annotation and analysis of human chromosome 3.</title>
        <authorList>
            <person name="Muzny D.M."/>
            <person name="Scherer S.E."/>
            <person name="Kaul R."/>
            <person name="Wang J."/>
            <person name="Yu J."/>
            <person name="Sudbrak R."/>
            <person name="Buhay C.J."/>
            <person name="Chen R."/>
            <person name="Cree A."/>
            <person name="Ding Y."/>
            <person name="Dugan-Rocha S."/>
            <person name="Gill R."/>
            <person name="Gunaratne P."/>
            <person name="Harris R.A."/>
            <person name="Hawes A.C."/>
            <person name="Hernandez J."/>
            <person name="Hodgson A.V."/>
            <person name="Hume J."/>
            <person name="Jackson A."/>
            <person name="Khan Z.M."/>
            <person name="Kovar-Smith C."/>
            <person name="Lewis L.R."/>
            <person name="Lozado R.J."/>
            <person name="Metzker M.L."/>
            <person name="Milosavljevic A."/>
            <person name="Miner G.R."/>
            <person name="Morgan M.B."/>
            <person name="Nazareth L.V."/>
            <person name="Scott G."/>
            <person name="Sodergren E."/>
            <person name="Song X.-Z."/>
            <person name="Steffen D."/>
            <person name="Wei S."/>
            <person name="Wheeler D.A."/>
            <person name="Wright M.W."/>
            <person name="Worley K.C."/>
            <person name="Yuan Y."/>
            <person name="Zhang Z."/>
            <person name="Adams C.Q."/>
            <person name="Ansari-Lari M.A."/>
            <person name="Ayele M."/>
            <person name="Brown M.J."/>
            <person name="Chen G."/>
            <person name="Chen Z."/>
            <person name="Clendenning J."/>
            <person name="Clerc-Blankenburg K.P."/>
            <person name="Chen R."/>
            <person name="Chen Z."/>
            <person name="Davis C."/>
            <person name="Delgado O."/>
            <person name="Dinh H.H."/>
            <person name="Dong W."/>
            <person name="Draper H."/>
            <person name="Ernst S."/>
            <person name="Fu G."/>
            <person name="Gonzalez-Garay M.L."/>
            <person name="Garcia D.K."/>
            <person name="Gillett W."/>
            <person name="Gu J."/>
            <person name="Hao B."/>
            <person name="Haugen E."/>
            <person name="Havlak P."/>
            <person name="He X."/>
            <person name="Hennig S."/>
            <person name="Hu S."/>
            <person name="Huang W."/>
            <person name="Jackson L.R."/>
            <person name="Jacob L.S."/>
            <person name="Kelly S.H."/>
            <person name="Kube M."/>
            <person name="Levy R."/>
            <person name="Li Z."/>
            <person name="Liu B."/>
            <person name="Liu J."/>
            <person name="Liu W."/>
            <person name="Lu J."/>
            <person name="Maheshwari M."/>
            <person name="Nguyen B.-V."/>
            <person name="Okwuonu G.O."/>
            <person name="Palmeiri A."/>
            <person name="Pasternak S."/>
            <person name="Perez L.M."/>
            <person name="Phelps K.A."/>
            <person name="Plopper F.J."/>
            <person name="Qiang B."/>
            <person name="Raymond C."/>
            <person name="Rodriguez R."/>
            <person name="Saenphimmachak C."/>
            <person name="Santibanez J."/>
            <person name="Shen H."/>
            <person name="Shen Y."/>
            <person name="Subramanian S."/>
            <person name="Tabor P.E."/>
            <person name="Verduzco D."/>
            <person name="Waldron L."/>
            <person name="Wang J."/>
            <person name="Wang J."/>
            <person name="Wang Q."/>
            <person name="Williams G.A."/>
            <person name="Wong G.K.-S."/>
            <person name="Yao Z."/>
            <person name="Zhang J."/>
            <person name="Zhang X."/>
            <person name="Zhao G."/>
            <person name="Zhou J."/>
            <person name="Zhou Y."/>
            <person name="Nelson D."/>
            <person name="Lehrach H."/>
            <person name="Reinhardt R."/>
            <person name="Naylor S.L."/>
            <person name="Yang H."/>
            <person name="Olson M."/>
            <person name="Weinstock G."/>
            <person name="Gibbs R.A."/>
        </authorList>
    </citation>
    <scope>NUCLEOTIDE SEQUENCE [LARGE SCALE GENOMIC DNA]</scope>
</reference>
<reference key="2">
    <citation type="journal article" date="1998" name="DNA Res.">
        <title>Prediction of the coding sequences of unidentified human genes. XI. The complete sequences of 100 new cDNA clones from brain which code for large proteins in vitro.</title>
        <authorList>
            <person name="Nagase T."/>
            <person name="Ishikawa K."/>
            <person name="Suyama M."/>
            <person name="Kikuno R."/>
            <person name="Miyajima N."/>
            <person name="Tanaka A."/>
            <person name="Kotani H."/>
            <person name="Nomura N."/>
            <person name="Ohara O."/>
        </authorList>
    </citation>
    <scope>NUCLEOTIDE SEQUENCE [LARGE SCALE MRNA] OF 83-1467</scope>
    <source>
        <tissue>Brain</tissue>
    </source>
</reference>
<reference key="3">
    <citation type="journal article" date="2002" name="DNA Res.">
        <title>Construction of expression-ready cDNA clones for KIAA genes: manual curation of 330 KIAA cDNA clones.</title>
        <authorList>
            <person name="Nakajima D."/>
            <person name="Okazaki N."/>
            <person name="Yamakawa H."/>
            <person name="Kikuno R."/>
            <person name="Ohara O."/>
            <person name="Nagase T."/>
        </authorList>
    </citation>
    <scope>SEQUENCE REVISION</scope>
</reference>
<reference key="4">
    <citation type="journal article" date="2004" name="Genome Res.">
        <title>The status, quality, and expansion of the NIH full-length cDNA project: the Mammalian Gene Collection (MGC).</title>
        <authorList>
            <consortium name="The MGC Project Team"/>
        </authorList>
    </citation>
    <scope>NUCLEOTIDE SEQUENCE [LARGE SCALE MRNA] OF 97-1467</scope>
    <source>
        <tissue>Eye</tissue>
        <tissue>Placenta</tissue>
    </source>
</reference>
<reference key="5">
    <citation type="journal article" date="2006" name="Cell">
        <title>Global, in vivo, and site-specific phosphorylation dynamics in signaling networks.</title>
        <authorList>
            <person name="Olsen J.V."/>
            <person name="Blagoev B."/>
            <person name="Gnad F."/>
            <person name="Macek B."/>
            <person name="Kumar C."/>
            <person name="Mortensen P."/>
            <person name="Mann M."/>
        </authorList>
    </citation>
    <scope>PHOSPHORYLATION [LARGE SCALE ANALYSIS] AT SER-1169 AND SER-1172</scope>
    <scope>IDENTIFICATION BY MASS SPECTROMETRY [LARGE SCALE ANALYSIS]</scope>
    <source>
        <tissue>Cervix carcinoma</tissue>
    </source>
</reference>
<reference key="6">
    <citation type="journal article" date="2008" name="Proc. Natl. Acad. Sci. U.S.A.">
        <title>A quantitative atlas of mitotic phosphorylation.</title>
        <authorList>
            <person name="Dephoure N."/>
            <person name="Zhou C."/>
            <person name="Villen J."/>
            <person name="Beausoleil S.A."/>
            <person name="Bakalarski C.E."/>
            <person name="Elledge S.J."/>
            <person name="Gygi S.P."/>
        </authorList>
    </citation>
    <scope>PHOSPHORYLATION [LARGE SCALE ANALYSIS] AT SER-1169 AND SER-1172</scope>
    <scope>IDENTIFICATION BY MASS SPECTROMETRY [LARGE SCALE ANALYSIS]</scope>
    <source>
        <tissue>Cervix carcinoma</tissue>
    </source>
</reference>
<reference key="7">
    <citation type="journal article" date="2009" name="Sci. Signal.">
        <title>Quantitative phosphoproteomic analysis of T cell receptor signaling reveals system-wide modulation of protein-protein interactions.</title>
        <authorList>
            <person name="Mayya V."/>
            <person name="Lundgren D.H."/>
            <person name="Hwang S.-I."/>
            <person name="Rezaul K."/>
            <person name="Wu L."/>
            <person name="Eng J.K."/>
            <person name="Rodionov V."/>
            <person name="Han D.K."/>
        </authorList>
    </citation>
    <scope>PHOSPHORYLATION [LARGE SCALE ANALYSIS] AT SER-1169 AND SER-1172</scope>
    <scope>IDENTIFICATION BY MASS SPECTROMETRY [LARGE SCALE ANALYSIS]</scope>
    <source>
        <tissue>Leukemic T-cell</tissue>
    </source>
</reference>
<reference key="8">
    <citation type="journal article" date="2010" name="Sci. Signal.">
        <title>Quantitative phosphoproteomics reveals widespread full phosphorylation site occupancy during mitosis.</title>
        <authorList>
            <person name="Olsen J.V."/>
            <person name="Vermeulen M."/>
            <person name="Santamaria A."/>
            <person name="Kumar C."/>
            <person name="Miller M.L."/>
            <person name="Jensen L.J."/>
            <person name="Gnad F."/>
            <person name="Cox J."/>
            <person name="Jensen T.S."/>
            <person name="Nigg E.A."/>
            <person name="Brunak S."/>
            <person name="Mann M."/>
        </authorList>
    </citation>
    <scope>PHOSPHORYLATION [LARGE SCALE ANALYSIS] AT SER-1169 AND SER-1172</scope>
    <scope>IDENTIFICATION BY MASS SPECTROMETRY [LARGE SCALE ANALYSIS]</scope>
    <source>
        <tissue>Cervix carcinoma</tissue>
    </source>
</reference>
<reference key="9">
    <citation type="journal article" date="2011" name="BMC Syst. Biol.">
        <title>Initial characterization of the human central proteome.</title>
        <authorList>
            <person name="Burkard T.R."/>
            <person name="Planyavsky M."/>
            <person name="Kaupe I."/>
            <person name="Breitwieser F.P."/>
            <person name="Buerckstuemmer T."/>
            <person name="Bennett K.L."/>
            <person name="Superti-Furga G."/>
            <person name="Colinge J."/>
        </authorList>
    </citation>
    <scope>IDENTIFICATION BY MASS SPECTROMETRY [LARGE SCALE ANALYSIS]</scope>
</reference>
<reference key="10">
    <citation type="journal article" date="2011" name="Sci. Signal.">
        <title>System-wide temporal characterization of the proteome and phosphoproteome of human embryonic stem cell differentiation.</title>
        <authorList>
            <person name="Rigbolt K.T."/>
            <person name="Prokhorova T.A."/>
            <person name="Akimov V."/>
            <person name="Henningsen J."/>
            <person name="Johansen P.T."/>
            <person name="Kratchmarova I."/>
            <person name="Kassem M."/>
            <person name="Mann M."/>
            <person name="Olsen J.V."/>
            <person name="Blagoev B."/>
        </authorList>
    </citation>
    <scope>PHOSPHORYLATION [LARGE SCALE ANALYSIS] AT THR-1260</scope>
    <scope>IDENTIFICATION BY MASS SPECTROMETRY [LARGE SCALE ANALYSIS]</scope>
</reference>
<reference key="11">
    <citation type="journal article" date="2013" name="J. Proteome Res.">
        <title>Toward a comprehensive characterization of a human cancer cell phosphoproteome.</title>
        <authorList>
            <person name="Zhou H."/>
            <person name="Di Palma S."/>
            <person name="Preisinger C."/>
            <person name="Peng M."/>
            <person name="Polat A.N."/>
            <person name="Heck A.J."/>
            <person name="Mohammed S."/>
        </authorList>
    </citation>
    <scope>PHOSPHORYLATION [LARGE SCALE ANALYSIS] AT THR-1260</scope>
    <scope>IDENTIFICATION BY MASS SPECTROMETRY [LARGE SCALE ANALYSIS]</scope>
    <source>
        <tissue>Cervix carcinoma</tissue>
        <tissue>Erythroleukemia</tissue>
    </source>
</reference>
<reference key="12">
    <citation type="journal article" date="2015" name="Cell Rep.">
        <title>SUMO-2 orchestrates chromatin modifiers in response to DNA damage.</title>
        <authorList>
            <person name="Hendriks I.A."/>
            <person name="Treffers L.W."/>
            <person name="Verlaan-de Vries M."/>
            <person name="Olsen J.V."/>
            <person name="Vertegaal A.C."/>
        </authorList>
    </citation>
    <scope>SUMOYLATION [LARGE SCALE ANALYSIS] AT LYS-1018</scope>
    <scope>IDENTIFICATION BY MASS SPECTROMETRY [LARGE SCALE ANALYSIS]</scope>
</reference>
<reference key="13">
    <citation type="journal article" date="2017" name="Nat. Struct. Mol. Biol.">
        <title>Site-specific mapping of the human SUMO proteome reveals co-modification with phosphorylation.</title>
        <authorList>
            <person name="Hendriks I.A."/>
            <person name="Lyon D."/>
            <person name="Young C."/>
            <person name="Jensen L.J."/>
            <person name="Vertegaal A.C."/>
            <person name="Nielsen M.L."/>
        </authorList>
    </citation>
    <scope>SUMOYLATION [LARGE SCALE ANALYSIS] AT LYS-115; LYS-127; LYS-272; LYS-665; LYS-682; LYS-759; LYS-901; LYS-1014 AND LYS-1018</scope>
    <scope>IDENTIFICATION BY MASS SPECTROMETRY [LARGE SCALE ANALYSIS]</scope>
</reference>
<accession>Q9Y4B4</accession>
<accession>Q8TB57</accession>
<accession>Q9BV54</accession>
<sequence length="1467" mass="162769">MSDESASGSDPDLDPDVELEDAEEEEEEEEVAVEECDRDDEEDLLDDPSLEGMCGTEHAQLGEDGQQPPRCTSTTSSQSEPSEQLRRHQGKNLASEDPKKKRAQKPSHMRRNIRKLLREDQLEPVTKAAQQEELERRKRLEQQRKDYAAPIPTVPLEFLPEEIALRASDGPQLPPRVLAQEVICLDSSSGSEDEKSSRDEVIELSSGEEDTLHIVDSSESVSEDDEEEEKGGTHVNDVLNQRDALGRVLVNLNHPPEEENVFLAPQLARAVKPHQIGGIRFLYDNLVESLERFKTSSGFGCILAHSMGLGKTLQVISFIDVLFRHTPAKTVLAIVPVNTLQNWLAEFNMWLPPPEALPADNKPEEVQPRFFKVHILNDEHKTMASRAKVMADWVSEGGVLLMGYEMYRLLTLKKSFATGRPKKTKKRSHPVIIDLDEEDRQQEFRREFEKALCRPGPDVVICDEGHRIKNCQASTSQALKNIRSRRRVVLTGYPLQNNLIEYWCMVDFVRPDFLGTRQEFSNMFERPILNGQCIDSTPQDVRLMRYRSHVLHSLLEGFVQRRGHTVLKIHLPAKEENVILVRLSKIQRDLYTQFMDRFRDCGSSGWLGLNPLKAFCVCCKIWNHPDVLYEALQKESLANEQDLDVEELGSAGTSARCPPQGTKGKGEDSTLASSMGEATNSKFLQGVGFNPFQERGNNIVTYEWAKDLLTNYQTGVLENSPKMVLLFHLIEESVKLGDKILVFSQSLSTLALIEEFLGKREVPCPPGTEGQGAQKWVRNISYFRLDGSTPAFERERLINQFNDPSNLTTWLFLLSTRAGCLGVNLIGANRVVVFDASWNPCHDAQAVCRVYRYGQKKPCYIYRLVADYTLEKKIYDRQISKQGMSDRVVDDLNPMLNFTRKEVENLLHFVEKEPAPQVSLNVKGIKESVLQLACLKYPHLITKEPFEHESLLLNRKDHKLTKAEKKAAKKSYEEDKRTSVPYTRPSYAQYYPASDQSLTSIPAFSQRNWQPTLKGDEKPVASVRPVQSTPIPMMPRHVPLGGSVSSASSTNPSMNFPINYLQRAGVLVQKVVTTTDIVIPGLNSSTDVQARINAGESIHIIRGTKGTYIRTSDGRIFAVRATGKPKVPEDGRMAASGSQGPSCESTSNGRHSASSPKAPDPEGLARPVSPDSPEIISELQQYADVAAARESRQSSPSTNAALPGPPAQLMDSSAVPGTALGTEPRLGGHCLNSSLLVTGQPCGDRHPVLDLRGHKRKLATPPAAQESSRRRSRKGHLPAPVQPYEHGYPVSGGFAMPPVSLNHNLTTPFTSQAGENSLFMGSTPSYYQLSNLLADARLVFPVTTDPLVPAGPVSSSSTATSVTASNPSFMLNPSVPGILPSYSLPFSQPLLSEPRMFAPFPSPVLPSNLSRGMSIYPGYMSPHAGYPAGGLLRSQVPPFDSHEVAEVGFSSNDDEDKDDDVIEVTGK</sequence>
<gene>
    <name type="primary">RAD54L2</name>
    <name type="synonym">ARIP4</name>
    <name type="synonym">KIAA0809</name>
</gene>
<protein>
    <recommendedName>
        <fullName>Helicase ARIP4</fullName>
        <ecNumber>3.6.4.12</ecNumber>
    </recommendedName>
    <alternativeName>
        <fullName>Androgen receptor-interacting protein 4</fullName>
    </alternativeName>
    <alternativeName>
        <fullName>RAD54-like protein 2</fullName>
    </alternativeName>
</protein>
<organism>
    <name type="scientific">Homo sapiens</name>
    <name type="common">Human</name>
    <dbReference type="NCBI Taxonomy" id="9606"/>
    <lineage>
        <taxon>Eukaryota</taxon>
        <taxon>Metazoa</taxon>
        <taxon>Chordata</taxon>
        <taxon>Craniata</taxon>
        <taxon>Vertebrata</taxon>
        <taxon>Euteleostomi</taxon>
        <taxon>Mammalia</taxon>
        <taxon>Eutheria</taxon>
        <taxon>Euarchontoglires</taxon>
        <taxon>Primates</taxon>
        <taxon>Haplorrhini</taxon>
        <taxon>Catarrhini</taxon>
        <taxon>Hominidae</taxon>
        <taxon>Homo</taxon>
    </lineage>
</organism>
<dbReference type="EC" id="3.6.4.12"/>
<dbReference type="EMBL" id="AC099050">
    <property type="status" value="NOT_ANNOTATED_CDS"/>
    <property type="molecule type" value="Genomic_DNA"/>
</dbReference>
<dbReference type="EMBL" id="AC113933">
    <property type="status" value="NOT_ANNOTATED_CDS"/>
    <property type="molecule type" value="Genomic_DNA"/>
</dbReference>
<dbReference type="EMBL" id="AB018352">
    <property type="protein sequence ID" value="BAA34529.2"/>
    <property type="molecule type" value="mRNA"/>
</dbReference>
<dbReference type="EMBL" id="BC001474">
    <property type="protein sequence ID" value="AAH01474.2"/>
    <property type="molecule type" value="mRNA"/>
</dbReference>
<dbReference type="EMBL" id="BC024298">
    <property type="protein sequence ID" value="AAH24298.1"/>
    <property type="status" value="ALT_INIT"/>
    <property type="molecule type" value="mRNA"/>
</dbReference>
<dbReference type="CCDS" id="CCDS33765.2"/>
<dbReference type="RefSeq" id="NP_001309182.1">
    <property type="nucleotide sequence ID" value="NM_001322253.2"/>
</dbReference>
<dbReference type="RefSeq" id="NP_001309185.1">
    <property type="nucleotide sequence ID" value="NM_001322256.2"/>
</dbReference>
<dbReference type="RefSeq" id="NP_055921.2">
    <property type="nucleotide sequence ID" value="NM_015106.4"/>
</dbReference>
<dbReference type="RefSeq" id="XP_006713125.1">
    <property type="nucleotide sequence ID" value="XM_006713062.3"/>
</dbReference>
<dbReference type="RefSeq" id="XP_016861476.1">
    <property type="nucleotide sequence ID" value="XM_017005987.1"/>
</dbReference>
<dbReference type="RefSeq" id="XP_016861477.1">
    <property type="nucleotide sequence ID" value="XM_017005988.1"/>
</dbReference>
<dbReference type="SMR" id="Q9Y4B4"/>
<dbReference type="BioGRID" id="116750">
    <property type="interactions" value="98"/>
</dbReference>
<dbReference type="DIP" id="DIP-47284N"/>
<dbReference type="FunCoup" id="Q9Y4B4">
    <property type="interactions" value="1278"/>
</dbReference>
<dbReference type="IntAct" id="Q9Y4B4">
    <property type="interactions" value="59"/>
</dbReference>
<dbReference type="MINT" id="Q9Y4B4"/>
<dbReference type="STRING" id="9606.ENSP00000386520"/>
<dbReference type="CarbonylDB" id="Q9Y4B4"/>
<dbReference type="GlyCosmos" id="Q9Y4B4">
    <property type="glycosylation" value="3 sites, 1 glycan"/>
</dbReference>
<dbReference type="GlyGen" id="Q9Y4B4">
    <property type="glycosylation" value="7 sites, 1 N-linked glycan (1 site), 1 O-linked glycan (6 sites)"/>
</dbReference>
<dbReference type="iPTMnet" id="Q9Y4B4"/>
<dbReference type="PhosphoSitePlus" id="Q9Y4B4"/>
<dbReference type="BioMuta" id="RAD54L2"/>
<dbReference type="DMDM" id="296439458"/>
<dbReference type="jPOST" id="Q9Y4B4"/>
<dbReference type="MassIVE" id="Q9Y4B4"/>
<dbReference type="PaxDb" id="9606-ENSP00000386520"/>
<dbReference type="PeptideAtlas" id="Q9Y4B4"/>
<dbReference type="ProteomicsDB" id="86146"/>
<dbReference type="Pumba" id="Q9Y4B4"/>
<dbReference type="Antibodypedia" id="31021">
    <property type="antibodies" value="146 antibodies from 18 providers"/>
</dbReference>
<dbReference type="DNASU" id="23132"/>
<dbReference type="Ensembl" id="ENST00000409535.6">
    <property type="protein sequence ID" value="ENSP00000386520.1"/>
    <property type="gene ID" value="ENSG00000164080.14"/>
</dbReference>
<dbReference type="Ensembl" id="ENST00000684192.1">
    <property type="protein sequence ID" value="ENSP00000507587.1"/>
    <property type="gene ID" value="ENSG00000164080.14"/>
</dbReference>
<dbReference type="GeneID" id="23132"/>
<dbReference type="KEGG" id="hsa:23132"/>
<dbReference type="MANE-Select" id="ENST00000684192.1">
    <property type="protein sequence ID" value="ENSP00000507587.1"/>
    <property type="RefSeq nucleotide sequence ID" value="NM_015106.4"/>
    <property type="RefSeq protein sequence ID" value="NP_055921.2"/>
</dbReference>
<dbReference type="UCSC" id="uc011bdt.3">
    <property type="organism name" value="human"/>
</dbReference>
<dbReference type="AGR" id="HGNC:29123"/>
<dbReference type="CTD" id="23132"/>
<dbReference type="DisGeNET" id="23132"/>
<dbReference type="GeneCards" id="RAD54L2"/>
<dbReference type="HGNC" id="HGNC:29123">
    <property type="gene designation" value="RAD54L2"/>
</dbReference>
<dbReference type="HPA" id="ENSG00000164080">
    <property type="expression patterns" value="Low tissue specificity"/>
</dbReference>
<dbReference type="MIM" id="620006">
    <property type="type" value="gene"/>
</dbReference>
<dbReference type="neXtProt" id="NX_Q9Y4B4"/>
<dbReference type="OpenTargets" id="ENSG00000164080"/>
<dbReference type="PharmGKB" id="PA143485591"/>
<dbReference type="VEuPathDB" id="HostDB:ENSG00000164080"/>
<dbReference type="eggNOG" id="KOG1016">
    <property type="taxonomic scope" value="Eukaryota"/>
</dbReference>
<dbReference type="GeneTree" id="ENSGT00940000155763"/>
<dbReference type="InParanoid" id="Q9Y4B4"/>
<dbReference type="OMA" id="SWAVDIM"/>
<dbReference type="OrthoDB" id="9900844at2759"/>
<dbReference type="PAN-GO" id="Q9Y4B4">
    <property type="GO annotations" value="1 GO annotation based on evolutionary models"/>
</dbReference>
<dbReference type="PhylomeDB" id="Q9Y4B4"/>
<dbReference type="TreeFam" id="TF313172"/>
<dbReference type="PathwayCommons" id="Q9Y4B4"/>
<dbReference type="SABIO-RK" id="Q9Y4B4"/>
<dbReference type="SignaLink" id="Q9Y4B4"/>
<dbReference type="BioGRID-ORCS" id="23132">
    <property type="hits" value="33 hits in 1173 CRISPR screens"/>
</dbReference>
<dbReference type="ChiTaRS" id="RAD54L2">
    <property type="organism name" value="human"/>
</dbReference>
<dbReference type="GenomeRNAi" id="23132"/>
<dbReference type="Pharos" id="Q9Y4B4">
    <property type="development level" value="Tbio"/>
</dbReference>
<dbReference type="PRO" id="PR:Q9Y4B4"/>
<dbReference type="Proteomes" id="UP000005640">
    <property type="component" value="Chromosome 3"/>
</dbReference>
<dbReference type="RNAct" id="Q9Y4B4">
    <property type="molecule type" value="protein"/>
</dbReference>
<dbReference type="Bgee" id="ENSG00000164080">
    <property type="expression patterns" value="Expressed in secondary oocyte and 172 other cell types or tissues"/>
</dbReference>
<dbReference type="ExpressionAtlas" id="Q9Y4B4">
    <property type="expression patterns" value="baseline and differential"/>
</dbReference>
<dbReference type="GO" id="GO:0005634">
    <property type="term" value="C:nucleus"/>
    <property type="evidence" value="ECO:0000318"/>
    <property type="project" value="GO_Central"/>
</dbReference>
<dbReference type="GO" id="GO:0005524">
    <property type="term" value="F:ATP binding"/>
    <property type="evidence" value="ECO:0007669"/>
    <property type="project" value="UniProtKB-KW"/>
</dbReference>
<dbReference type="GO" id="GO:0016887">
    <property type="term" value="F:ATP hydrolysis activity"/>
    <property type="evidence" value="ECO:0007669"/>
    <property type="project" value="InterPro"/>
</dbReference>
<dbReference type="GO" id="GO:0140658">
    <property type="term" value="F:ATP-dependent chromatin remodeler activity"/>
    <property type="evidence" value="ECO:0000318"/>
    <property type="project" value="GO_Central"/>
</dbReference>
<dbReference type="GO" id="GO:0003677">
    <property type="term" value="F:DNA binding"/>
    <property type="evidence" value="ECO:0007669"/>
    <property type="project" value="UniProtKB-KW"/>
</dbReference>
<dbReference type="GO" id="GO:0004386">
    <property type="term" value="F:helicase activity"/>
    <property type="evidence" value="ECO:0007669"/>
    <property type="project" value="UniProtKB-KW"/>
</dbReference>
<dbReference type="GO" id="GO:0003712">
    <property type="term" value="F:transcription coregulator activity"/>
    <property type="evidence" value="ECO:0000318"/>
    <property type="project" value="GO_Central"/>
</dbReference>
<dbReference type="GO" id="GO:0006325">
    <property type="term" value="P:chromatin organization"/>
    <property type="evidence" value="ECO:0000318"/>
    <property type="project" value="GO_Central"/>
</dbReference>
<dbReference type="CDD" id="cd18069">
    <property type="entry name" value="DEXHc_ARIP4"/>
    <property type="match status" value="1"/>
</dbReference>
<dbReference type="CDD" id="cd18793">
    <property type="entry name" value="SF2_C_SNF"/>
    <property type="match status" value="1"/>
</dbReference>
<dbReference type="FunFam" id="3.40.50.10810:FF:000032">
    <property type="entry name" value="Helicase ARIP4"/>
    <property type="match status" value="1"/>
</dbReference>
<dbReference type="FunFam" id="3.40.50.300:FF:000377">
    <property type="entry name" value="transcriptional regulator ATRX isoform X1"/>
    <property type="match status" value="1"/>
</dbReference>
<dbReference type="Gene3D" id="3.40.50.300">
    <property type="entry name" value="P-loop containing nucleotide triphosphate hydrolases"/>
    <property type="match status" value="2"/>
</dbReference>
<dbReference type="Gene3D" id="1.20.120.850">
    <property type="entry name" value="SWI2/SNF2 ATPases, N-terminal domain"/>
    <property type="match status" value="1"/>
</dbReference>
<dbReference type="Gene3D" id="3.40.50.10810">
    <property type="entry name" value="Tandem AAA-ATPase domain"/>
    <property type="match status" value="1"/>
</dbReference>
<dbReference type="InterPro" id="IPR044574">
    <property type="entry name" value="ARIP4-like"/>
</dbReference>
<dbReference type="InterPro" id="IPR044573">
    <property type="entry name" value="ARIP4_DEXHc"/>
</dbReference>
<dbReference type="InterPro" id="IPR014001">
    <property type="entry name" value="Helicase_ATP-bd"/>
</dbReference>
<dbReference type="InterPro" id="IPR001650">
    <property type="entry name" value="Helicase_C-like"/>
</dbReference>
<dbReference type="InterPro" id="IPR027417">
    <property type="entry name" value="P-loop_NTPase"/>
</dbReference>
<dbReference type="InterPro" id="IPR038718">
    <property type="entry name" value="SNF2-like_sf"/>
</dbReference>
<dbReference type="InterPro" id="IPR049730">
    <property type="entry name" value="SNF2/RAD54-like_C"/>
</dbReference>
<dbReference type="InterPro" id="IPR000330">
    <property type="entry name" value="SNF2_N"/>
</dbReference>
<dbReference type="PANTHER" id="PTHR45797:SF1">
    <property type="entry name" value="HELICASE ARIP4"/>
    <property type="match status" value="1"/>
</dbReference>
<dbReference type="PANTHER" id="PTHR45797">
    <property type="entry name" value="RAD54-LIKE"/>
    <property type="match status" value="1"/>
</dbReference>
<dbReference type="Pfam" id="PF00271">
    <property type="entry name" value="Helicase_C"/>
    <property type="match status" value="1"/>
</dbReference>
<dbReference type="Pfam" id="PF00176">
    <property type="entry name" value="SNF2-rel_dom"/>
    <property type="match status" value="1"/>
</dbReference>
<dbReference type="SMART" id="SM00487">
    <property type="entry name" value="DEXDc"/>
    <property type="match status" value="1"/>
</dbReference>
<dbReference type="SMART" id="SM00490">
    <property type="entry name" value="HELICc"/>
    <property type="match status" value="1"/>
</dbReference>
<dbReference type="SUPFAM" id="SSF52540">
    <property type="entry name" value="P-loop containing nucleoside triphosphate hydrolases"/>
    <property type="match status" value="2"/>
</dbReference>
<dbReference type="PROSITE" id="PS51192">
    <property type="entry name" value="HELICASE_ATP_BIND_1"/>
    <property type="match status" value="1"/>
</dbReference>
<dbReference type="PROSITE" id="PS51194">
    <property type="entry name" value="HELICASE_CTER"/>
    <property type="match status" value="1"/>
</dbReference>
<keyword id="KW-0067">ATP-binding</keyword>
<keyword id="KW-0238">DNA-binding</keyword>
<keyword id="KW-0347">Helicase</keyword>
<keyword id="KW-0378">Hydrolase</keyword>
<keyword id="KW-1017">Isopeptide bond</keyword>
<keyword id="KW-0547">Nucleotide-binding</keyword>
<keyword id="KW-0539">Nucleus</keyword>
<keyword id="KW-0597">Phosphoprotein</keyword>
<keyword id="KW-1267">Proteomics identification</keyword>
<keyword id="KW-1185">Reference proteome</keyword>
<keyword id="KW-0677">Repeat</keyword>
<keyword id="KW-0832">Ubl conjugation</keyword>
<evidence type="ECO:0000250" key="1"/>
<evidence type="ECO:0000255" key="2">
    <source>
        <dbReference type="PROSITE-ProRule" id="PRU00541"/>
    </source>
</evidence>
<evidence type="ECO:0000255" key="3">
    <source>
        <dbReference type="PROSITE-ProRule" id="PRU00542"/>
    </source>
</evidence>
<evidence type="ECO:0000256" key="4">
    <source>
        <dbReference type="SAM" id="MobiDB-lite"/>
    </source>
</evidence>
<evidence type="ECO:0000305" key="5"/>
<evidence type="ECO:0007744" key="6">
    <source>
    </source>
</evidence>
<evidence type="ECO:0007744" key="7">
    <source>
    </source>
</evidence>
<evidence type="ECO:0007744" key="8">
    <source>
    </source>
</evidence>
<evidence type="ECO:0007744" key="9">
    <source>
    </source>
</evidence>
<evidence type="ECO:0007744" key="10">
    <source>
    </source>
</evidence>
<evidence type="ECO:0007744" key="11">
    <source>
    </source>
</evidence>
<evidence type="ECO:0007744" key="12">
    <source>
    </source>
</evidence>
<evidence type="ECO:0007744" key="13">
    <source>
    </source>
</evidence>
<feature type="chain" id="PRO_0000315781" description="Helicase ARIP4">
    <location>
        <begin position="1"/>
        <end position="1467"/>
    </location>
</feature>
<feature type="domain" description="Helicase ATP-binding" evidence="2">
    <location>
        <begin position="292"/>
        <end position="512"/>
    </location>
</feature>
<feature type="domain" description="Helicase C-terminal" evidence="3">
    <location>
        <begin position="728"/>
        <end position="896"/>
    </location>
</feature>
<feature type="region of interest" description="Disordered" evidence="4">
    <location>
        <begin position="1"/>
        <end position="150"/>
    </location>
</feature>
<feature type="region of interest" description="Disordered" evidence="4">
    <location>
        <begin position="186"/>
        <end position="234"/>
    </location>
</feature>
<feature type="region of interest" description="Disordered" evidence="4">
    <location>
        <begin position="649"/>
        <end position="673"/>
    </location>
</feature>
<feature type="region of interest" description="Disordered" evidence="4">
    <location>
        <begin position="1120"/>
        <end position="1171"/>
    </location>
</feature>
<feature type="region of interest" description="Disordered" evidence="4">
    <location>
        <begin position="1184"/>
        <end position="1221"/>
    </location>
</feature>
<feature type="region of interest" description="Disordered" evidence="4">
    <location>
        <begin position="1247"/>
        <end position="1284"/>
    </location>
</feature>
<feature type="region of interest" description="Disordered" evidence="4">
    <location>
        <begin position="1445"/>
        <end position="1467"/>
    </location>
</feature>
<feature type="short sequence motif" description="DEAH box">
    <location>
        <begin position="463"/>
        <end position="466"/>
    </location>
</feature>
<feature type="short sequence motif" description="LXXLL motif 1">
    <location>
        <begin position="551"/>
        <end position="555"/>
    </location>
</feature>
<feature type="short sequence motif" description="LXXLL motif 2">
    <location>
        <begin position="1329"/>
        <end position="1333"/>
    </location>
</feature>
<feature type="compositionally biased region" description="Acidic residues" evidence="4">
    <location>
        <begin position="11"/>
        <end position="49"/>
    </location>
</feature>
<feature type="compositionally biased region" description="Low complexity" evidence="4">
    <location>
        <begin position="72"/>
        <end position="82"/>
    </location>
</feature>
<feature type="compositionally biased region" description="Basic residues" evidence="4">
    <location>
        <begin position="100"/>
        <end position="115"/>
    </location>
</feature>
<feature type="compositionally biased region" description="Basic and acidic residues" evidence="4">
    <location>
        <begin position="133"/>
        <end position="147"/>
    </location>
</feature>
<feature type="compositionally biased region" description="Basic and acidic residues" evidence="4">
    <location>
        <begin position="192"/>
        <end position="201"/>
    </location>
</feature>
<feature type="compositionally biased region" description="Polar residues" evidence="4">
    <location>
        <begin position="1136"/>
        <end position="1155"/>
    </location>
</feature>
<feature type="compositionally biased region" description="Acidic residues" evidence="4">
    <location>
        <begin position="1452"/>
        <end position="1467"/>
    </location>
</feature>
<feature type="binding site" evidence="2">
    <location>
        <begin position="305"/>
        <end position="312"/>
    </location>
    <ligand>
        <name>ATP</name>
        <dbReference type="ChEBI" id="CHEBI:30616"/>
    </ligand>
</feature>
<feature type="modified residue" description="Phosphoserine" evidence="6 7 8 9">
    <location>
        <position position="1169"/>
    </location>
</feature>
<feature type="modified residue" description="Phosphoserine" evidence="6 7 8 9">
    <location>
        <position position="1172"/>
    </location>
</feature>
<feature type="modified residue" description="Phosphothreonine" evidence="10 11">
    <location>
        <position position="1260"/>
    </location>
</feature>
<feature type="cross-link" description="Glycyl lysine isopeptide (Lys-Gly) (interchain with G-Cter in SUMO2)" evidence="13">
    <location>
        <position position="115"/>
    </location>
</feature>
<feature type="cross-link" description="Glycyl lysine isopeptide (Lys-Gly) (interchain with G-Cter in SUMO2)" evidence="13">
    <location>
        <position position="127"/>
    </location>
</feature>
<feature type="cross-link" description="Glycyl lysine isopeptide (Lys-Gly) (interchain with G-Cter in SUMO2)" evidence="13">
    <location>
        <position position="272"/>
    </location>
</feature>
<feature type="cross-link" description="Glycyl lysine isopeptide (Lys-Gly) (interchain with G-Cter in SUMO2)" evidence="13">
    <location>
        <position position="665"/>
    </location>
</feature>
<feature type="cross-link" description="Glycyl lysine isopeptide (Lys-Gly) (interchain with G-Cter in SUMO2)" evidence="13">
    <location>
        <position position="682"/>
    </location>
</feature>
<feature type="cross-link" description="Glycyl lysine isopeptide (Lys-Gly) (interchain with G-Cter in SUMO2)" evidence="13">
    <location>
        <position position="759"/>
    </location>
</feature>
<feature type="cross-link" description="Glycyl lysine isopeptide (Lys-Gly) (interchain with G-Cter in SUMO2)" evidence="13">
    <location>
        <position position="901"/>
    </location>
</feature>
<feature type="cross-link" description="Glycyl lysine isopeptide (Lys-Gly) (interchain with G-Cter in SUMO2)" evidence="13">
    <location>
        <position position="1014"/>
    </location>
</feature>
<feature type="cross-link" description="Glycyl lysine isopeptide (Lys-Gly) (interchain with G-Cter in SUMO2)" evidence="12 13">
    <location>
        <position position="1018"/>
    </location>
</feature>
<feature type="sequence variant" id="VAR_038302" description="In dbSNP:rs35712917.">
    <original>F</original>
    <variation>L</variation>
    <location>
        <position position="1369"/>
    </location>
</feature>
<feature type="sequence conflict" description="In Ref. 2; BAA34529." evidence="5" ref="2">
    <original>E</original>
    <variation>Q</variation>
    <location>
        <position position="123"/>
    </location>
</feature>
<feature type="sequence conflict" description="In Ref. 4; AAH24298." evidence="5" ref="4">
    <original>L</original>
    <variation>F</variation>
    <location>
        <position position="249"/>
    </location>
</feature>
<feature type="sequence conflict" description="In Ref. 2; BAA34529." evidence="5" ref="2">
    <original>A</original>
    <variation>V</variation>
    <location>
        <position position="328"/>
    </location>
</feature>
<feature type="sequence conflict" description="In Ref. 4; AAH01474." evidence="5" ref="4">
    <original>Y</original>
    <variation>F</variation>
    <location>
        <position position="860"/>
    </location>
</feature>
<proteinExistence type="evidence at protein level"/>
<comment type="function">
    <text evidence="1">DNA helicase that modulates androgen receptor (AR)-dependent transactivation in a promoter-dependent manner. Not able to remodel mononucleosomes in vitro (By similarity).</text>
</comment>
<comment type="catalytic activity">
    <reaction>
        <text>ATP + H2O = ADP + phosphate + H(+)</text>
        <dbReference type="Rhea" id="RHEA:13065"/>
        <dbReference type="ChEBI" id="CHEBI:15377"/>
        <dbReference type="ChEBI" id="CHEBI:15378"/>
        <dbReference type="ChEBI" id="CHEBI:30616"/>
        <dbReference type="ChEBI" id="CHEBI:43474"/>
        <dbReference type="ChEBI" id="CHEBI:456216"/>
        <dbReference type="EC" id="3.6.4.12"/>
    </reaction>
</comment>
<comment type="activity regulation">
    <text evidence="1">Enzyme activity is enhanced by dsDNA (double-stranded DNA) and ssDNA (single-stranded DNA).</text>
</comment>
<comment type="subunit">
    <text evidence="1">Interacts with AR via its N-terminus. Interacts with DYRK1A. Binds DNA and mononucleosomes, but does not seem to form large multiprotein complexes (By similarity).</text>
</comment>
<comment type="interaction">
    <interactant intactId="EBI-948156">
        <id>Q9Y4B4</id>
    </interactant>
    <interactant intactId="EBI-11524452">
        <id>Q8N9N5-2</id>
        <label>BANP</label>
    </interactant>
    <organismsDiffer>false</organismsDiffer>
    <experiments>3</experiments>
</comment>
<comment type="interaction">
    <interactant intactId="EBI-948156">
        <id>Q9Y4B4</id>
    </interactant>
    <interactant intactId="EBI-711810">
        <id>O14503</id>
        <label>BHLHE40</label>
    </interactant>
    <organismsDiffer>false</organismsDiffer>
    <experiments>3</experiments>
</comment>
<comment type="interaction">
    <interactant intactId="EBI-948156">
        <id>Q9Y4B4</id>
    </interactant>
    <interactant intactId="EBI-78176">
        <id>Q13185</id>
        <label>CBX3</label>
    </interactant>
    <organismsDiffer>false</organismsDiffer>
    <experiments>3</experiments>
</comment>
<comment type="interaction">
    <interactant intactId="EBI-948156">
        <id>Q9Y4B4</id>
    </interactant>
    <interactant intactId="EBI-726822">
        <id>Q9BPY3</id>
        <label>FAM118B</label>
    </interactant>
    <organismsDiffer>false</organismsDiffer>
    <experiments>3</experiments>
</comment>
<comment type="interaction">
    <interactant intactId="EBI-948156">
        <id>Q9Y4B4</id>
    </interactant>
    <interactant intactId="EBI-740641">
        <id>Q9NP66</id>
        <label>HMG20A</label>
    </interactant>
    <organismsDiffer>false</organismsDiffer>
    <experiments>3</experiments>
</comment>
<comment type="interaction">
    <interactant intactId="EBI-948156">
        <id>Q9Y4B4</id>
    </interactant>
    <interactant intactId="EBI-1046507">
        <id>O60812</id>
        <label>HNRNPCL1</label>
    </interactant>
    <organismsDiffer>false</organismsDiffer>
    <experiments>3</experiments>
</comment>
<comment type="interaction">
    <interactant intactId="EBI-948156">
        <id>Q9Y4B4</id>
    </interactant>
    <interactant intactId="EBI-746815">
        <id>Q86YM7</id>
        <label>HOMER1</label>
    </interactant>
    <organismsDiffer>false</organismsDiffer>
    <experiments>3</experiments>
</comment>
<comment type="interaction">
    <interactant intactId="EBI-948156">
        <id>Q9Y4B4</id>
    </interactant>
    <interactant intactId="EBI-12188657">
        <id>P20839-3</id>
        <label>IMPDH1</label>
    </interactant>
    <organismsDiffer>false</organismsDiffer>
    <experiments>3</experiments>
</comment>
<comment type="interaction">
    <interactant intactId="EBI-948156">
        <id>Q9Y4B4</id>
    </interactant>
    <interactant intactId="EBI-14069005">
        <id>Q9BVG8-5</id>
        <label>KIFC3</label>
    </interactant>
    <organismsDiffer>false</organismsDiffer>
    <experiments>3</experiments>
</comment>
<comment type="interaction">
    <interactant intactId="EBI-948156">
        <id>Q9Y4B4</id>
    </interactant>
    <interactant intactId="EBI-22311199">
        <id>Q3LI67</id>
        <label>KRTAP6-3</label>
    </interactant>
    <organismsDiffer>false</organismsDiffer>
    <experiments>3</experiments>
</comment>
<comment type="interaction">
    <interactant intactId="EBI-948156">
        <id>Q9Y4B4</id>
    </interactant>
    <interactant intactId="EBI-11741311">
        <id>Q5T752</id>
        <label>LCE1D</label>
    </interactant>
    <organismsDiffer>false</organismsDiffer>
    <experiments>3</experiments>
</comment>
<comment type="interaction">
    <interactant intactId="EBI-948156">
        <id>Q9Y4B4</id>
    </interactant>
    <interactant intactId="EBI-11958008">
        <id>Q5T754</id>
        <label>LCE1F</label>
    </interactant>
    <organismsDiffer>false</organismsDiffer>
    <experiments>3</experiments>
</comment>
<comment type="interaction">
    <interactant intactId="EBI-948156">
        <id>Q9Y4B4</id>
    </interactant>
    <interactant intactId="EBI-712261">
        <id>P22234</id>
        <label>PAICS</label>
    </interactant>
    <organismsDiffer>false</organismsDiffer>
    <experiments>3</experiments>
</comment>
<comment type="interaction">
    <interactant intactId="EBI-948156">
        <id>Q9Y4B4</id>
    </interactant>
    <interactant intactId="EBI-8673859">
        <id>P28069</id>
        <label>POU1F1</label>
    </interactant>
    <organismsDiffer>false</organismsDiffer>
    <experiments>3</experiments>
</comment>
<comment type="interaction">
    <interactant intactId="EBI-948156">
        <id>Q9Y4B4</id>
    </interactant>
    <interactant intactId="EBI-348380">
        <id>P25788</id>
        <label>PSMA3</label>
    </interactant>
    <organismsDiffer>false</organismsDiffer>
    <experiments>3</experiments>
</comment>
<comment type="interaction">
    <interactant intactId="EBI-948156">
        <id>Q9Y4B4</id>
    </interactant>
    <interactant intactId="EBI-740343">
        <id>Q93062-3</id>
        <label>RBPMS</label>
    </interactant>
    <organismsDiffer>false</organismsDiffer>
    <experiments>3</experiments>
</comment>
<comment type="interaction">
    <interactant intactId="EBI-948156">
        <id>Q9Y4B4</id>
    </interactant>
    <interactant intactId="EBI-11984663">
        <id>Q06455-2</id>
        <label>RUNX1T1</label>
    </interactant>
    <organismsDiffer>false</organismsDiffer>
    <experiments>3</experiments>
</comment>
<comment type="interaction">
    <interactant intactId="EBI-948156">
        <id>Q9Y4B4</id>
    </interactant>
    <interactant intactId="EBI-747107">
        <id>Q8IUQ4</id>
        <label>SIAH1</label>
    </interactant>
    <organismsDiffer>false</organismsDiffer>
    <experiments>3</experiments>
</comment>
<comment type="interaction">
    <interactant intactId="EBI-948156">
        <id>Q9Y4B4</id>
    </interactant>
    <interactant intactId="EBI-80140">
        <id>P63165</id>
        <label>SUMO1</label>
    </interactant>
    <organismsDiffer>false</organismsDiffer>
    <experiments>6</experiments>
</comment>
<comment type="interaction">
    <interactant intactId="EBI-948156">
        <id>Q9Y4B4</id>
    </interactant>
    <interactant intactId="EBI-11952651">
        <id>Q7Z6R9</id>
        <label>TFAP2D</label>
    </interactant>
    <organismsDiffer>false</organismsDiffer>
    <experiments>3</experiments>
</comment>
<comment type="interaction">
    <interactant intactId="EBI-948156">
        <id>Q9Y4B4</id>
    </interactant>
    <interactant intactId="EBI-741515">
        <id>Q9NVV9</id>
        <label>THAP1</label>
    </interactant>
    <organismsDiffer>false</organismsDiffer>
    <experiments>3</experiments>
</comment>
<comment type="interaction">
    <interactant intactId="EBI-948156">
        <id>Q9Y4B4</id>
    </interactant>
    <interactant intactId="EBI-355744">
        <id>Q12933</id>
        <label>TRAF2</label>
    </interactant>
    <organismsDiffer>false</organismsDiffer>
    <experiments>3</experiments>
</comment>
<comment type="interaction">
    <interactant intactId="EBI-948156">
        <id>Q9Y4B4</id>
    </interactant>
    <interactant intactId="EBI-3650647">
        <id>Q9BUZ4</id>
        <label>TRAF4</label>
    </interactant>
    <organismsDiffer>false</organismsDiffer>
    <experiments>3</experiments>
</comment>
<comment type="interaction">
    <interactant intactId="EBI-948156">
        <id>Q9Y4B4</id>
    </interactant>
    <interactant intactId="EBI-3918996">
        <id>Q9HCK0</id>
        <label>ZBTB26</label>
    </interactant>
    <organismsDiffer>false</organismsDiffer>
    <experiments>3</experiments>
</comment>
<comment type="interaction">
    <interactant intactId="EBI-948156">
        <id>Q9Y4B4</id>
    </interactant>
    <interactant intactId="EBI-5458880">
        <id>Q96GY0</id>
        <label>ZC2HC1A</label>
    </interactant>
    <organismsDiffer>false</organismsDiffer>
    <experiments>3</experiments>
</comment>
<comment type="subcellular location">
    <subcellularLocation>
        <location evidence="1">Nucleus</location>
    </subcellularLocation>
    <text evidence="1">Localizes in speckle-like nuclear compartments.</text>
</comment>
<comment type="domain">
    <text evidence="1">Leu-Xaa-Xaa-Leu-Leu (LXXLL) motifs are known to be important for the association with nuclear receptors.</text>
</comment>
<comment type="PTM">
    <text evidence="1">Sumoylated.</text>
</comment>
<comment type="similarity">
    <text evidence="5">Belongs to the SNF2/RAD54 helicase family.</text>
</comment>
<comment type="sequence caution" evidence="5">
    <conflict type="erroneous initiation">
        <sequence resource="EMBL-CDS" id="AAH24298"/>
    </conflict>
    <text>Truncated N-terminus.</text>
</comment>
<name>ARIP4_HUMAN</name>